<sequence>MSDQFDAKAFLKTVTSQPGVYRMYDAGGTVIYVGKAKDLKKRLSSYFRSNLASRKTEALVAQIQQIDVTVTHTETEALLLEHNYIKLYQPRYNVLLRDDKSYPFIFLSGDTHPRLAMHRGAKHAKGEYFGPFPNGYAVRETLALLQKIFPIRQCENSVYRNRSRPCLQYQIGRCLGPCVEGLVSEEEYAQQVEYVRLFLSGKDDQVLTQLISRMETASQNLEFEEAARIRDQIQAVRRVTEKQFVSNTGDDLDVIGVAFDAGMACVHVLFIRQGKVLGSRSYFPKVPGGTELSEVVETFVGQFYLQGSQMRTLPGEILLDFNLSDKTLLADSLSELAGRKINVQTKPRGDRARYLKLARTNAATALTSKLSQQSTVHQRLTALASVLKLPEVKRMECFDISHTMGEQTVASCVVFDANGPLRAEYRRYNITGITPGDDYAAMNQVLRRRYGKAIDDSKIPDVILIDGGKGQLAQAKNVFAELDVSWDKNHPLLLGVAKGADRKAGLETLFFEPEGEGFSLPPDSPALHVIQHIRDESHDHAIGGHRKKRAKVKNTSSLETIEGVGPKRRQMLLKYMGGLQGLRNASVEEIAKVPGISQGLAEKIFWSLKH</sequence>
<reference key="1">
    <citation type="journal article" date="2009" name="PLoS Genet.">
        <title>Organised genome dynamics in the Escherichia coli species results in highly diverse adaptive paths.</title>
        <authorList>
            <person name="Touchon M."/>
            <person name="Hoede C."/>
            <person name="Tenaillon O."/>
            <person name="Barbe V."/>
            <person name="Baeriswyl S."/>
            <person name="Bidet P."/>
            <person name="Bingen E."/>
            <person name="Bonacorsi S."/>
            <person name="Bouchier C."/>
            <person name="Bouvet O."/>
            <person name="Calteau A."/>
            <person name="Chiapello H."/>
            <person name="Clermont O."/>
            <person name="Cruveiller S."/>
            <person name="Danchin A."/>
            <person name="Diard M."/>
            <person name="Dossat C."/>
            <person name="Karoui M.E."/>
            <person name="Frapy E."/>
            <person name="Garry L."/>
            <person name="Ghigo J.M."/>
            <person name="Gilles A.M."/>
            <person name="Johnson J."/>
            <person name="Le Bouguenec C."/>
            <person name="Lescat M."/>
            <person name="Mangenot S."/>
            <person name="Martinez-Jehanne V."/>
            <person name="Matic I."/>
            <person name="Nassif X."/>
            <person name="Oztas S."/>
            <person name="Petit M.A."/>
            <person name="Pichon C."/>
            <person name="Rouy Z."/>
            <person name="Ruf C.S."/>
            <person name="Schneider D."/>
            <person name="Tourret J."/>
            <person name="Vacherie B."/>
            <person name="Vallenet D."/>
            <person name="Medigue C."/>
            <person name="Rocha E.P.C."/>
            <person name="Denamur E."/>
        </authorList>
    </citation>
    <scope>NUCLEOTIDE SEQUENCE [LARGE SCALE GENOMIC DNA]</scope>
    <source>
        <strain>55989 / EAEC</strain>
    </source>
</reference>
<accession>B7L8S5</accession>
<keyword id="KW-0963">Cytoplasm</keyword>
<keyword id="KW-0227">DNA damage</keyword>
<keyword id="KW-0228">DNA excision</keyword>
<keyword id="KW-0234">DNA repair</keyword>
<keyword id="KW-0267">Excision nuclease</keyword>
<keyword id="KW-1185">Reference proteome</keyword>
<keyword id="KW-0742">SOS response</keyword>
<feature type="chain" id="PRO_1000200581" description="UvrABC system protein C">
    <location>
        <begin position="1"/>
        <end position="610"/>
    </location>
</feature>
<feature type="domain" description="GIY-YIG" evidence="1">
    <location>
        <begin position="16"/>
        <end position="94"/>
    </location>
</feature>
<feature type="domain" description="UVR" evidence="1">
    <location>
        <begin position="204"/>
        <end position="239"/>
    </location>
</feature>
<protein>
    <recommendedName>
        <fullName evidence="1">UvrABC system protein C</fullName>
        <shortName evidence="1">Protein UvrC</shortName>
    </recommendedName>
    <alternativeName>
        <fullName evidence="1">Excinuclease ABC subunit C</fullName>
    </alternativeName>
</protein>
<proteinExistence type="inferred from homology"/>
<comment type="function">
    <text evidence="1">The UvrABC repair system catalyzes the recognition and processing of DNA lesions. UvrC both incises the 5' and 3' sides of the lesion. The N-terminal half is responsible for the 3' incision and the C-terminal half is responsible for the 5' incision.</text>
</comment>
<comment type="subunit">
    <text evidence="1">Interacts with UvrB in an incision complex.</text>
</comment>
<comment type="subcellular location">
    <subcellularLocation>
        <location evidence="1">Cytoplasm</location>
    </subcellularLocation>
</comment>
<comment type="similarity">
    <text evidence="1">Belongs to the UvrC family.</text>
</comment>
<dbReference type="EMBL" id="CU928145">
    <property type="protein sequence ID" value="CAU98007.1"/>
    <property type="molecule type" value="Genomic_DNA"/>
</dbReference>
<dbReference type="RefSeq" id="WP_001283421.1">
    <property type="nucleotide sequence ID" value="NZ_CP028304.1"/>
</dbReference>
<dbReference type="SMR" id="B7L8S5"/>
<dbReference type="GeneID" id="93776218"/>
<dbReference type="KEGG" id="eck:EC55989_2133"/>
<dbReference type="HOGENOM" id="CLU_014841_3_0_6"/>
<dbReference type="Proteomes" id="UP000000746">
    <property type="component" value="Chromosome"/>
</dbReference>
<dbReference type="GO" id="GO:0005737">
    <property type="term" value="C:cytoplasm"/>
    <property type="evidence" value="ECO:0007669"/>
    <property type="project" value="UniProtKB-SubCell"/>
</dbReference>
<dbReference type="GO" id="GO:0009380">
    <property type="term" value="C:excinuclease repair complex"/>
    <property type="evidence" value="ECO:0007669"/>
    <property type="project" value="InterPro"/>
</dbReference>
<dbReference type="GO" id="GO:0003677">
    <property type="term" value="F:DNA binding"/>
    <property type="evidence" value="ECO:0007669"/>
    <property type="project" value="UniProtKB-UniRule"/>
</dbReference>
<dbReference type="GO" id="GO:0009381">
    <property type="term" value="F:excinuclease ABC activity"/>
    <property type="evidence" value="ECO:0007669"/>
    <property type="project" value="UniProtKB-UniRule"/>
</dbReference>
<dbReference type="GO" id="GO:0006289">
    <property type="term" value="P:nucleotide-excision repair"/>
    <property type="evidence" value="ECO:0007669"/>
    <property type="project" value="UniProtKB-UniRule"/>
</dbReference>
<dbReference type="GO" id="GO:0009432">
    <property type="term" value="P:SOS response"/>
    <property type="evidence" value="ECO:0007669"/>
    <property type="project" value="UniProtKB-UniRule"/>
</dbReference>
<dbReference type="CDD" id="cd10434">
    <property type="entry name" value="GIY-YIG_UvrC_Cho"/>
    <property type="match status" value="1"/>
</dbReference>
<dbReference type="FunFam" id="1.10.150.20:FF:000005">
    <property type="entry name" value="UvrABC system protein C"/>
    <property type="match status" value="1"/>
</dbReference>
<dbReference type="FunFam" id="3.30.420.340:FF:000001">
    <property type="entry name" value="UvrABC system protein C"/>
    <property type="match status" value="1"/>
</dbReference>
<dbReference type="FunFam" id="3.40.1440.10:FF:000001">
    <property type="entry name" value="UvrABC system protein C"/>
    <property type="match status" value="1"/>
</dbReference>
<dbReference type="FunFam" id="4.10.860.10:FF:000002">
    <property type="entry name" value="UvrABC system protein C"/>
    <property type="match status" value="1"/>
</dbReference>
<dbReference type="Gene3D" id="1.10.150.20">
    <property type="entry name" value="5' to 3' exonuclease, C-terminal subdomain"/>
    <property type="match status" value="1"/>
</dbReference>
<dbReference type="Gene3D" id="3.40.1440.10">
    <property type="entry name" value="GIY-YIG endonuclease"/>
    <property type="match status" value="1"/>
</dbReference>
<dbReference type="Gene3D" id="4.10.860.10">
    <property type="entry name" value="UVR domain"/>
    <property type="match status" value="1"/>
</dbReference>
<dbReference type="Gene3D" id="3.30.420.340">
    <property type="entry name" value="UvrC, RNAse H endonuclease domain"/>
    <property type="match status" value="1"/>
</dbReference>
<dbReference type="HAMAP" id="MF_00203">
    <property type="entry name" value="UvrC"/>
    <property type="match status" value="1"/>
</dbReference>
<dbReference type="InterPro" id="IPR000305">
    <property type="entry name" value="GIY-YIG_endonuc"/>
</dbReference>
<dbReference type="InterPro" id="IPR035901">
    <property type="entry name" value="GIY-YIG_endonuc_sf"/>
</dbReference>
<dbReference type="InterPro" id="IPR047296">
    <property type="entry name" value="GIY-YIG_UvrC_Cho"/>
</dbReference>
<dbReference type="InterPro" id="IPR003583">
    <property type="entry name" value="Hlx-hairpin-Hlx_DNA-bd_motif"/>
</dbReference>
<dbReference type="InterPro" id="IPR010994">
    <property type="entry name" value="RuvA_2-like"/>
</dbReference>
<dbReference type="InterPro" id="IPR001943">
    <property type="entry name" value="UVR_dom"/>
</dbReference>
<dbReference type="InterPro" id="IPR036876">
    <property type="entry name" value="UVR_dom_sf"/>
</dbReference>
<dbReference type="InterPro" id="IPR050066">
    <property type="entry name" value="UvrABC_protein_C"/>
</dbReference>
<dbReference type="InterPro" id="IPR004791">
    <property type="entry name" value="UvrC"/>
</dbReference>
<dbReference type="InterPro" id="IPR001162">
    <property type="entry name" value="UvrC_RNase_H_dom"/>
</dbReference>
<dbReference type="InterPro" id="IPR038476">
    <property type="entry name" value="UvrC_RNase_H_dom_sf"/>
</dbReference>
<dbReference type="NCBIfam" id="NF001824">
    <property type="entry name" value="PRK00558.1-5"/>
    <property type="match status" value="1"/>
</dbReference>
<dbReference type="NCBIfam" id="TIGR00194">
    <property type="entry name" value="uvrC"/>
    <property type="match status" value="1"/>
</dbReference>
<dbReference type="PANTHER" id="PTHR30562:SF1">
    <property type="entry name" value="UVRABC SYSTEM PROTEIN C"/>
    <property type="match status" value="1"/>
</dbReference>
<dbReference type="PANTHER" id="PTHR30562">
    <property type="entry name" value="UVRC/OXIDOREDUCTASE"/>
    <property type="match status" value="1"/>
</dbReference>
<dbReference type="Pfam" id="PF01541">
    <property type="entry name" value="GIY-YIG"/>
    <property type="match status" value="1"/>
</dbReference>
<dbReference type="Pfam" id="PF14520">
    <property type="entry name" value="HHH_5"/>
    <property type="match status" value="1"/>
</dbReference>
<dbReference type="Pfam" id="PF02151">
    <property type="entry name" value="UVR"/>
    <property type="match status" value="1"/>
</dbReference>
<dbReference type="Pfam" id="PF22920">
    <property type="entry name" value="UvrC_RNaseH"/>
    <property type="match status" value="1"/>
</dbReference>
<dbReference type="Pfam" id="PF08459">
    <property type="entry name" value="UvrC_RNaseH_dom"/>
    <property type="match status" value="1"/>
</dbReference>
<dbReference type="SMART" id="SM00465">
    <property type="entry name" value="GIYc"/>
    <property type="match status" value="1"/>
</dbReference>
<dbReference type="SMART" id="SM00278">
    <property type="entry name" value="HhH1"/>
    <property type="match status" value="2"/>
</dbReference>
<dbReference type="SUPFAM" id="SSF46600">
    <property type="entry name" value="C-terminal UvrC-binding domain of UvrB"/>
    <property type="match status" value="1"/>
</dbReference>
<dbReference type="SUPFAM" id="SSF82771">
    <property type="entry name" value="GIY-YIG endonuclease"/>
    <property type="match status" value="1"/>
</dbReference>
<dbReference type="SUPFAM" id="SSF47781">
    <property type="entry name" value="RuvA domain 2-like"/>
    <property type="match status" value="1"/>
</dbReference>
<dbReference type="PROSITE" id="PS50164">
    <property type="entry name" value="GIY_YIG"/>
    <property type="match status" value="1"/>
</dbReference>
<dbReference type="PROSITE" id="PS50151">
    <property type="entry name" value="UVR"/>
    <property type="match status" value="1"/>
</dbReference>
<dbReference type="PROSITE" id="PS50165">
    <property type="entry name" value="UVRC"/>
    <property type="match status" value="1"/>
</dbReference>
<evidence type="ECO:0000255" key="1">
    <source>
        <dbReference type="HAMAP-Rule" id="MF_00203"/>
    </source>
</evidence>
<gene>
    <name evidence="1" type="primary">uvrC</name>
    <name type="ordered locus">EC55989_2133</name>
</gene>
<name>UVRC_ECO55</name>
<organism>
    <name type="scientific">Escherichia coli (strain 55989 / EAEC)</name>
    <dbReference type="NCBI Taxonomy" id="585055"/>
    <lineage>
        <taxon>Bacteria</taxon>
        <taxon>Pseudomonadati</taxon>
        <taxon>Pseudomonadota</taxon>
        <taxon>Gammaproteobacteria</taxon>
        <taxon>Enterobacterales</taxon>
        <taxon>Enterobacteriaceae</taxon>
        <taxon>Escherichia</taxon>
    </lineage>
</organism>